<keyword id="KW-0687">Ribonucleoprotein</keyword>
<keyword id="KW-0689">Ribosomal protein</keyword>
<keyword id="KW-0694">RNA-binding</keyword>
<keyword id="KW-0699">rRNA-binding</keyword>
<accession>Q2JUA5</accession>
<reference key="1">
    <citation type="journal article" date="2007" name="ISME J.">
        <title>Population level functional diversity in a microbial community revealed by comparative genomic and metagenomic analyses.</title>
        <authorList>
            <person name="Bhaya D."/>
            <person name="Grossman A.R."/>
            <person name="Steunou A.-S."/>
            <person name="Khuri N."/>
            <person name="Cohan F.M."/>
            <person name="Hamamura N."/>
            <person name="Melendrez M.C."/>
            <person name="Bateson M.M."/>
            <person name="Ward D.M."/>
            <person name="Heidelberg J.F."/>
        </authorList>
    </citation>
    <scope>NUCLEOTIDE SEQUENCE [LARGE SCALE GENOMIC DNA]</scope>
    <source>
        <strain>JA-3-3Ab</strain>
    </source>
</reference>
<feature type="chain" id="PRO_0000236604" description="Large ribosomal subunit protein bL9">
    <location>
        <begin position="1"/>
        <end position="153"/>
    </location>
</feature>
<organism>
    <name type="scientific">Synechococcus sp. (strain JA-3-3Ab)</name>
    <name type="common">Cyanobacteria bacterium Yellowstone A-Prime</name>
    <dbReference type="NCBI Taxonomy" id="321327"/>
    <lineage>
        <taxon>Bacteria</taxon>
        <taxon>Bacillati</taxon>
        <taxon>Cyanobacteriota</taxon>
        <taxon>Cyanophyceae</taxon>
        <taxon>Synechococcales</taxon>
        <taxon>Synechococcaceae</taxon>
        <taxon>Synechococcus</taxon>
    </lineage>
</organism>
<comment type="function">
    <text evidence="1">Binds to the 23S rRNA.</text>
</comment>
<comment type="similarity">
    <text evidence="1">Belongs to the bacterial ribosomal protein bL9 family.</text>
</comment>
<dbReference type="EMBL" id="CP000239">
    <property type="protein sequence ID" value="ABC99715.1"/>
    <property type="molecule type" value="Genomic_DNA"/>
</dbReference>
<dbReference type="RefSeq" id="WP_011430393.1">
    <property type="nucleotide sequence ID" value="NC_007775.1"/>
</dbReference>
<dbReference type="SMR" id="Q2JUA5"/>
<dbReference type="STRING" id="321327.CYA_1551"/>
<dbReference type="KEGG" id="cya:CYA_1551"/>
<dbReference type="eggNOG" id="COG0359">
    <property type="taxonomic scope" value="Bacteria"/>
</dbReference>
<dbReference type="HOGENOM" id="CLU_078938_5_1_3"/>
<dbReference type="OrthoDB" id="9788336at2"/>
<dbReference type="Proteomes" id="UP000008818">
    <property type="component" value="Chromosome"/>
</dbReference>
<dbReference type="GO" id="GO:1990904">
    <property type="term" value="C:ribonucleoprotein complex"/>
    <property type="evidence" value="ECO:0007669"/>
    <property type="project" value="UniProtKB-KW"/>
</dbReference>
<dbReference type="GO" id="GO:0005840">
    <property type="term" value="C:ribosome"/>
    <property type="evidence" value="ECO:0007669"/>
    <property type="project" value="UniProtKB-KW"/>
</dbReference>
<dbReference type="GO" id="GO:0019843">
    <property type="term" value="F:rRNA binding"/>
    <property type="evidence" value="ECO:0007669"/>
    <property type="project" value="UniProtKB-UniRule"/>
</dbReference>
<dbReference type="GO" id="GO:0003735">
    <property type="term" value="F:structural constituent of ribosome"/>
    <property type="evidence" value="ECO:0007669"/>
    <property type="project" value="InterPro"/>
</dbReference>
<dbReference type="GO" id="GO:0006412">
    <property type="term" value="P:translation"/>
    <property type="evidence" value="ECO:0007669"/>
    <property type="project" value="UniProtKB-UniRule"/>
</dbReference>
<dbReference type="Gene3D" id="3.10.430.100">
    <property type="entry name" value="Ribosomal protein L9, C-terminal domain"/>
    <property type="match status" value="1"/>
</dbReference>
<dbReference type="Gene3D" id="3.40.5.10">
    <property type="entry name" value="Ribosomal protein L9, N-terminal domain"/>
    <property type="match status" value="1"/>
</dbReference>
<dbReference type="HAMAP" id="MF_00503">
    <property type="entry name" value="Ribosomal_bL9"/>
    <property type="match status" value="1"/>
</dbReference>
<dbReference type="InterPro" id="IPR000244">
    <property type="entry name" value="Ribosomal_bL9"/>
</dbReference>
<dbReference type="InterPro" id="IPR009027">
    <property type="entry name" value="Ribosomal_bL9/RNase_H1_N"/>
</dbReference>
<dbReference type="InterPro" id="IPR020594">
    <property type="entry name" value="Ribosomal_bL9_bac/chp"/>
</dbReference>
<dbReference type="InterPro" id="IPR020069">
    <property type="entry name" value="Ribosomal_bL9_C"/>
</dbReference>
<dbReference type="InterPro" id="IPR036791">
    <property type="entry name" value="Ribosomal_bL9_C_sf"/>
</dbReference>
<dbReference type="InterPro" id="IPR020070">
    <property type="entry name" value="Ribosomal_bL9_N"/>
</dbReference>
<dbReference type="InterPro" id="IPR036935">
    <property type="entry name" value="Ribosomal_bL9_N_sf"/>
</dbReference>
<dbReference type="NCBIfam" id="TIGR00158">
    <property type="entry name" value="L9"/>
    <property type="match status" value="1"/>
</dbReference>
<dbReference type="PANTHER" id="PTHR21368">
    <property type="entry name" value="50S RIBOSOMAL PROTEIN L9"/>
    <property type="match status" value="1"/>
</dbReference>
<dbReference type="Pfam" id="PF03948">
    <property type="entry name" value="Ribosomal_L9_C"/>
    <property type="match status" value="1"/>
</dbReference>
<dbReference type="Pfam" id="PF01281">
    <property type="entry name" value="Ribosomal_L9_N"/>
    <property type="match status" value="1"/>
</dbReference>
<dbReference type="SUPFAM" id="SSF55658">
    <property type="entry name" value="L9 N-domain-like"/>
    <property type="match status" value="1"/>
</dbReference>
<dbReference type="SUPFAM" id="SSF55653">
    <property type="entry name" value="Ribosomal protein L9 C-domain"/>
    <property type="match status" value="1"/>
</dbReference>
<dbReference type="PROSITE" id="PS00651">
    <property type="entry name" value="RIBOSOMAL_L9"/>
    <property type="match status" value="1"/>
</dbReference>
<name>RL9_SYNJA</name>
<protein>
    <recommendedName>
        <fullName evidence="1">Large ribosomal subunit protein bL9</fullName>
    </recommendedName>
    <alternativeName>
        <fullName evidence="2">50S ribosomal protein L9</fullName>
    </alternativeName>
</protein>
<proteinExistence type="inferred from homology"/>
<sequence length="153" mass="17223">MAKDVQVMLRQAVPGLGKPGEVVSVRPGYARNYLFPRQMAVRLTPGLLKEQQMRREQEAARKLAEKQQAENYKKALETIGRFVIRKKVGEKDLLFGQVTASDIAEVVLATSGLDIDRRNVLLDEEIKKTGVYLVQVKLHPEVTATLRIQVTPE</sequence>
<gene>
    <name evidence="1" type="primary">rplI</name>
    <name evidence="1" type="synonym">rpl9</name>
    <name type="ordered locus">CYA_1551</name>
</gene>
<evidence type="ECO:0000255" key="1">
    <source>
        <dbReference type="HAMAP-Rule" id="MF_00503"/>
    </source>
</evidence>
<evidence type="ECO:0000305" key="2"/>